<name>DBP4_COCIM</name>
<reference key="1">
    <citation type="journal article" date="2009" name="Genome Res.">
        <title>Comparative genomic analyses of the human fungal pathogens Coccidioides and their relatives.</title>
        <authorList>
            <person name="Sharpton T.J."/>
            <person name="Stajich J.E."/>
            <person name="Rounsley S.D."/>
            <person name="Gardner M.J."/>
            <person name="Wortman J.R."/>
            <person name="Jordar V.S."/>
            <person name="Maiti R."/>
            <person name="Kodira C.D."/>
            <person name="Neafsey D.E."/>
            <person name="Zeng Q."/>
            <person name="Hung C.-Y."/>
            <person name="McMahan C."/>
            <person name="Muszewska A."/>
            <person name="Grynberg M."/>
            <person name="Mandel M.A."/>
            <person name="Kellner E.M."/>
            <person name="Barker B.M."/>
            <person name="Galgiani J.N."/>
            <person name="Orbach M.J."/>
            <person name="Kirkland T.N."/>
            <person name="Cole G.T."/>
            <person name="Henn M.R."/>
            <person name="Birren B.W."/>
            <person name="Taylor J.W."/>
        </authorList>
    </citation>
    <scope>NUCLEOTIDE SEQUENCE [LARGE SCALE GENOMIC DNA]</scope>
    <source>
        <strain>RS</strain>
    </source>
</reference>
<reference key="2">
    <citation type="journal article" date="2010" name="Genome Res.">
        <title>Population genomic sequencing of Coccidioides fungi reveals recent hybridization and transposon control.</title>
        <authorList>
            <person name="Neafsey D.E."/>
            <person name="Barker B.M."/>
            <person name="Sharpton T.J."/>
            <person name="Stajich J.E."/>
            <person name="Park D.J."/>
            <person name="Whiston E."/>
            <person name="Hung C.-Y."/>
            <person name="McMahan C."/>
            <person name="White J."/>
            <person name="Sykes S."/>
            <person name="Heiman D."/>
            <person name="Young S."/>
            <person name="Zeng Q."/>
            <person name="Abouelleil A."/>
            <person name="Aftuck L."/>
            <person name="Bessette D."/>
            <person name="Brown A."/>
            <person name="FitzGerald M."/>
            <person name="Lui A."/>
            <person name="Macdonald J.P."/>
            <person name="Priest M."/>
            <person name="Orbach M.J."/>
            <person name="Galgiani J.N."/>
            <person name="Kirkland T.N."/>
            <person name="Cole G.T."/>
            <person name="Birren B.W."/>
            <person name="Henn M.R."/>
            <person name="Taylor J.W."/>
            <person name="Rounsley S.D."/>
        </authorList>
    </citation>
    <scope>GENOME REANNOTATION</scope>
    <source>
        <strain>RS</strain>
    </source>
</reference>
<dbReference type="EC" id="3.6.4.13"/>
<dbReference type="EMBL" id="GG704911">
    <property type="protein sequence ID" value="EAS34878.1"/>
    <property type="molecule type" value="Genomic_DNA"/>
</dbReference>
<dbReference type="RefSeq" id="XP_001246461.1">
    <property type="nucleotide sequence ID" value="XM_001246460.2"/>
</dbReference>
<dbReference type="SMR" id="Q1EB31"/>
<dbReference type="FunCoup" id="Q1EB31">
    <property type="interactions" value="1015"/>
</dbReference>
<dbReference type="STRING" id="246410.Q1EB31"/>
<dbReference type="GeneID" id="4566908"/>
<dbReference type="KEGG" id="cim:CIMG_00232"/>
<dbReference type="VEuPathDB" id="FungiDB:CIMG_00232"/>
<dbReference type="InParanoid" id="Q1EB31"/>
<dbReference type="OMA" id="YDKMFER"/>
<dbReference type="OrthoDB" id="10259640at2759"/>
<dbReference type="Proteomes" id="UP000001261">
    <property type="component" value="Unassembled WGS sequence"/>
</dbReference>
<dbReference type="GO" id="GO:0005730">
    <property type="term" value="C:nucleolus"/>
    <property type="evidence" value="ECO:0007669"/>
    <property type="project" value="UniProtKB-SubCell"/>
</dbReference>
<dbReference type="GO" id="GO:0005524">
    <property type="term" value="F:ATP binding"/>
    <property type="evidence" value="ECO:0007669"/>
    <property type="project" value="UniProtKB-KW"/>
</dbReference>
<dbReference type="GO" id="GO:0016887">
    <property type="term" value="F:ATP hydrolysis activity"/>
    <property type="evidence" value="ECO:0007669"/>
    <property type="project" value="RHEA"/>
</dbReference>
<dbReference type="GO" id="GO:0003723">
    <property type="term" value="F:RNA binding"/>
    <property type="evidence" value="ECO:0007669"/>
    <property type="project" value="UniProtKB-KW"/>
</dbReference>
<dbReference type="GO" id="GO:0003724">
    <property type="term" value="F:RNA helicase activity"/>
    <property type="evidence" value="ECO:0007669"/>
    <property type="project" value="UniProtKB-EC"/>
</dbReference>
<dbReference type="GO" id="GO:0006364">
    <property type="term" value="P:rRNA processing"/>
    <property type="evidence" value="ECO:0007669"/>
    <property type="project" value="UniProtKB-KW"/>
</dbReference>
<dbReference type="CDD" id="cd17941">
    <property type="entry name" value="DEADc_DDX10"/>
    <property type="match status" value="1"/>
</dbReference>
<dbReference type="CDD" id="cd18787">
    <property type="entry name" value="SF2_C_DEAD"/>
    <property type="match status" value="1"/>
</dbReference>
<dbReference type="Gene3D" id="3.40.50.300">
    <property type="entry name" value="P-loop containing nucleotide triphosphate hydrolases"/>
    <property type="match status" value="2"/>
</dbReference>
<dbReference type="InterPro" id="IPR011545">
    <property type="entry name" value="DEAD/DEAH_box_helicase_dom"/>
</dbReference>
<dbReference type="InterPro" id="IPR014001">
    <property type="entry name" value="Helicase_ATP-bd"/>
</dbReference>
<dbReference type="InterPro" id="IPR001650">
    <property type="entry name" value="Helicase_C-like"/>
</dbReference>
<dbReference type="InterPro" id="IPR027417">
    <property type="entry name" value="P-loop_NTPase"/>
</dbReference>
<dbReference type="InterPro" id="IPR000629">
    <property type="entry name" value="RNA-helicase_DEAD-box_CS"/>
</dbReference>
<dbReference type="InterPro" id="IPR014014">
    <property type="entry name" value="RNA_helicase_DEAD_Q_motif"/>
</dbReference>
<dbReference type="InterPro" id="IPR025313">
    <property type="entry name" value="SPB4-like_CTE"/>
</dbReference>
<dbReference type="PANTHER" id="PTHR24031">
    <property type="entry name" value="RNA HELICASE"/>
    <property type="match status" value="1"/>
</dbReference>
<dbReference type="Pfam" id="PF13959">
    <property type="entry name" value="CTE_SPB4"/>
    <property type="match status" value="1"/>
</dbReference>
<dbReference type="Pfam" id="PF00270">
    <property type="entry name" value="DEAD"/>
    <property type="match status" value="1"/>
</dbReference>
<dbReference type="Pfam" id="PF00271">
    <property type="entry name" value="Helicase_C"/>
    <property type="match status" value="1"/>
</dbReference>
<dbReference type="SMART" id="SM00487">
    <property type="entry name" value="DEXDc"/>
    <property type="match status" value="1"/>
</dbReference>
<dbReference type="SMART" id="SM01178">
    <property type="entry name" value="DUF4217"/>
    <property type="match status" value="1"/>
</dbReference>
<dbReference type="SMART" id="SM00490">
    <property type="entry name" value="HELICc"/>
    <property type="match status" value="1"/>
</dbReference>
<dbReference type="SUPFAM" id="SSF52540">
    <property type="entry name" value="P-loop containing nucleoside triphosphate hydrolases"/>
    <property type="match status" value="1"/>
</dbReference>
<dbReference type="PROSITE" id="PS00039">
    <property type="entry name" value="DEAD_ATP_HELICASE"/>
    <property type="match status" value="1"/>
</dbReference>
<dbReference type="PROSITE" id="PS51192">
    <property type="entry name" value="HELICASE_ATP_BIND_1"/>
    <property type="match status" value="1"/>
</dbReference>
<dbReference type="PROSITE" id="PS51194">
    <property type="entry name" value="HELICASE_CTER"/>
    <property type="match status" value="1"/>
</dbReference>
<dbReference type="PROSITE" id="PS51195">
    <property type="entry name" value="Q_MOTIF"/>
    <property type="match status" value="1"/>
</dbReference>
<organism>
    <name type="scientific">Coccidioides immitis (strain RS)</name>
    <name type="common">Valley fever fungus</name>
    <dbReference type="NCBI Taxonomy" id="246410"/>
    <lineage>
        <taxon>Eukaryota</taxon>
        <taxon>Fungi</taxon>
        <taxon>Dikarya</taxon>
        <taxon>Ascomycota</taxon>
        <taxon>Pezizomycotina</taxon>
        <taxon>Eurotiomycetes</taxon>
        <taxon>Eurotiomycetidae</taxon>
        <taxon>Onygenales</taxon>
        <taxon>Onygenaceae</taxon>
        <taxon>Coccidioides</taxon>
    </lineage>
</organism>
<protein>
    <recommendedName>
        <fullName>ATP-dependent RNA helicase DBP4</fullName>
        <ecNumber>3.6.4.13</ecNumber>
    </recommendedName>
</protein>
<feature type="chain" id="PRO_0000256001" description="ATP-dependent RNA helicase DBP4">
    <location>
        <begin position="1"/>
        <end position="806"/>
    </location>
</feature>
<feature type="domain" description="Helicase ATP-binding" evidence="2">
    <location>
        <begin position="79"/>
        <end position="253"/>
    </location>
</feature>
<feature type="domain" description="Helicase C-terminal" evidence="3">
    <location>
        <begin position="279"/>
        <end position="438"/>
    </location>
</feature>
<feature type="region of interest" description="Disordered" evidence="4">
    <location>
        <begin position="1"/>
        <end position="37"/>
    </location>
</feature>
<feature type="region of interest" description="Disordered" evidence="4">
    <location>
        <begin position="495"/>
        <end position="530"/>
    </location>
</feature>
<feature type="region of interest" description="Disordered" evidence="4">
    <location>
        <begin position="555"/>
        <end position="584"/>
    </location>
</feature>
<feature type="region of interest" description="Disordered" evidence="4">
    <location>
        <begin position="692"/>
        <end position="795"/>
    </location>
</feature>
<feature type="short sequence motif" description="Q motif">
    <location>
        <begin position="48"/>
        <end position="76"/>
    </location>
</feature>
<feature type="short sequence motif" description="DEAD box">
    <location>
        <begin position="201"/>
        <end position="204"/>
    </location>
</feature>
<feature type="compositionally biased region" description="Basic and acidic residues" evidence="4">
    <location>
        <begin position="692"/>
        <end position="701"/>
    </location>
</feature>
<feature type="compositionally biased region" description="Basic residues" evidence="4">
    <location>
        <begin position="702"/>
        <end position="714"/>
    </location>
</feature>
<feature type="compositionally biased region" description="Basic and acidic residues" evidence="4">
    <location>
        <begin position="740"/>
        <end position="754"/>
    </location>
</feature>
<feature type="binding site" evidence="2">
    <location>
        <begin position="92"/>
        <end position="99"/>
    </location>
    <ligand>
        <name>ATP</name>
        <dbReference type="ChEBI" id="CHEBI:30616"/>
    </ligand>
</feature>
<comment type="function">
    <text evidence="1">ATP-dependent RNA helicase required for ribosome biogenesis. Involved in the release of U14 snoRNA in pre-ribosomal complexes. Required for pre-rRNA cleavage at site A2 (By similarity).</text>
</comment>
<comment type="catalytic activity">
    <reaction>
        <text>ATP + H2O = ADP + phosphate + H(+)</text>
        <dbReference type="Rhea" id="RHEA:13065"/>
        <dbReference type="ChEBI" id="CHEBI:15377"/>
        <dbReference type="ChEBI" id="CHEBI:15378"/>
        <dbReference type="ChEBI" id="CHEBI:30616"/>
        <dbReference type="ChEBI" id="CHEBI:43474"/>
        <dbReference type="ChEBI" id="CHEBI:456216"/>
        <dbReference type="EC" id="3.6.4.13"/>
    </reaction>
</comment>
<comment type="subunit">
    <text evidence="1">Interacts with the U3 and U14 snoRNAs. Associates with pre-ribosomal complexes (By similarity).</text>
</comment>
<comment type="subcellular location">
    <subcellularLocation>
        <location evidence="1">Nucleus</location>
        <location evidence="1">Nucleolus</location>
    </subcellularLocation>
</comment>
<comment type="domain">
    <text>The Q motif is unique to and characteristic of the DEAD box family of RNA helicases and controls ATP binding and hydrolysis.</text>
</comment>
<comment type="similarity">
    <text evidence="5">Belongs to the DEAD box helicase family. DDX10/DBP4 subfamily.</text>
</comment>
<proteinExistence type="inferred from homology"/>
<sequence>MAPAHSRTGKPQKPFRQNNRSLKRKRNEDDLSSLTQRVGELDPKSLAESFSELPLSDATLQGLSASHFKTLTDIQSRAVPHAIKGRDILGAAKTGSGKTLAFLVPVLENLYRKQWTEYDGLGALILSPTRELAIQIFEVLRKIGRYHTFSAGLVIGGKSLQEEQERLGRMNILVCTPGRMLQHMDQTAAFDTAHIQMLVLDEADRIMDMGFQSTVDAIVEHLPKERQTMLFSATQTKKVSDLARLSLRDPEYISVHEAASSATPASLQQHYVVTPLPEKLDTLWSFIRNTLKSKILVFFSSSKQVRFVYEAFRHMQPGIPLLHLHGRQKQSARIDITSKFSRAKYSCLFSTDVAARGLDFPAVDWVIQLDCPEDADTYIHRVGRTARYERDGRAVLFLDPSEEEGMLKRLEQKKIPIERINIKAKKQQSIMNQLQNMCFKDPALKYLGQKAFTSYVKSVHIQKDKDVFNVKSLPLEEFASSLGLPGAPRIKFIKGEDTKSRKNAPRHLAVVPSSDEDSDEEGLTKKKKENEVRTKYDRMFERRNQDVLTEHYTKLIRDEDEIDPDEKDNPAADADEDDGFLSVKRRFDAGDENLGEGLGSEAEIDGIKKGKAVQIDGKEPLIIDSKRREKLLKSKKKLLKYKGKGTKLVYDDEGNAHEIYEMEDEQQFKAQGDADAQRAKYLELEAERTRLADIRDKEIAKQKKREKKEKRRARARAEREAEDGPVAVLAPYEEDEGLREDDFSAEDRGSEDGRAPPSKKQKKWFQSDSDVDGEDGGKKRKRPRAQSPAQVETLEDLEALAAELLE</sequence>
<gene>
    <name type="primary">DBP4</name>
    <name type="ORF">CIMG_00232</name>
</gene>
<accession>Q1EB31</accession>
<accession>J3KGJ0</accession>
<keyword id="KW-0067">ATP-binding</keyword>
<keyword id="KW-0347">Helicase</keyword>
<keyword id="KW-0378">Hydrolase</keyword>
<keyword id="KW-0547">Nucleotide-binding</keyword>
<keyword id="KW-0539">Nucleus</keyword>
<keyword id="KW-1185">Reference proteome</keyword>
<keyword id="KW-0690">Ribosome biogenesis</keyword>
<keyword id="KW-0694">RNA-binding</keyword>
<keyword id="KW-0698">rRNA processing</keyword>
<evidence type="ECO:0000250" key="1"/>
<evidence type="ECO:0000255" key="2">
    <source>
        <dbReference type="PROSITE-ProRule" id="PRU00541"/>
    </source>
</evidence>
<evidence type="ECO:0000255" key="3">
    <source>
        <dbReference type="PROSITE-ProRule" id="PRU00542"/>
    </source>
</evidence>
<evidence type="ECO:0000256" key="4">
    <source>
        <dbReference type="SAM" id="MobiDB-lite"/>
    </source>
</evidence>
<evidence type="ECO:0000305" key="5"/>